<accession>Q8BFP9</accession>
<accession>Q3U5E5</accession>
<name>PDK1_MOUSE</name>
<gene>
    <name type="primary">Pdk1</name>
</gene>
<feature type="transit peptide" description="Mitochondrion" evidence="3">
    <location>
        <begin position="1"/>
        <end position="26"/>
    </location>
</feature>
<feature type="chain" id="PRO_0000023438" description="[Pyruvate dehydrogenase (acetyl-transferring)] kinase isozyme 1, mitochondrial">
    <location>
        <begin position="27"/>
        <end position="434"/>
    </location>
</feature>
<feature type="domain" description="Histidine kinase" evidence="4">
    <location>
        <begin position="161"/>
        <end position="391"/>
    </location>
</feature>
<feature type="binding site" evidence="1">
    <location>
        <begin position="277"/>
        <end position="284"/>
    </location>
    <ligand>
        <name>ATP</name>
        <dbReference type="ChEBI" id="CHEBI:30616"/>
    </ligand>
</feature>
<feature type="binding site" evidence="1">
    <location>
        <position position="316"/>
    </location>
    <ligand>
        <name>ATP</name>
        <dbReference type="ChEBI" id="CHEBI:30616"/>
    </ligand>
</feature>
<feature type="binding site" evidence="1">
    <location>
        <begin position="335"/>
        <end position="336"/>
    </location>
    <ligand>
        <name>ATP</name>
        <dbReference type="ChEBI" id="CHEBI:30616"/>
    </ligand>
</feature>
<feature type="binding site" evidence="1">
    <location>
        <begin position="352"/>
        <end position="357"/>
    </location>
    <ligand>
        <name>ATP</name>
        <dbReference type="ChEBI" id="CHEBI:30616"/>
    </ligand>
</feature>
<feature type="modified residue" description="Phosphotyrosine; by FGFR1" evidence="2">
    <location>
        <position position="136"/>
    </location>
</feature>
<feature type="modified residue" description="Phosphotyrosine; by FGFR1, ABL1, FLT3 and JAK2" evidence="2">
    <location>
        <position position="241"/>
    </location>
</feature>
<feature type="modified residue" description="Phosphotyrosine; by FGFR1" evidence="2">
    <location>
        <position position="242"/>
    </location>
</feature>
<feature type="modified residue" description="Phosphothreonine" evidence="2">
    <location>
        <position position="336"/>
    </location>
</feature>
<feature type="modified residue" description="N6-succinyllysine" evidence="8">
    <location>
        <position position="403"/>
    </location>
</feature>
<feature type="sequence conflict" description="In Ref. 1; BAC32879." evidence="7" ref="1">
    <original>R</original>
    <variation>S</variation>
    <location>
        <position position="324"/>
    </location>
</feature>
<protein>
    <recommendedName>
        <fullName>[Pyruvate dehydrogenase (acetyl-transferring)] kinase isozyme 1, mitochondrial</fullName>
        <ecNumber evidence="2">2.7.11.2</ecNumber>
    </recommendedName>
    <alternativeName>
        <fullName>Pyruvate dehydrogenase kinase isoform 1</fullName>
        <shortName>PDH kinase 1</shortName>
    </alternativeName>
</protein>
<sequence length="434" mass="48995">MRLARLLRGGTSVRPLCAVPCASRSLASASASGSGPASELGVPGQVDFYARFSPSPLSMKQFLDFGSVNACEKTSFMFLRQELPVRLANIMKEISLLPDNLLRTPSVQLVQSWYIQSLQELLDFKDKSAEDAKTIYEFTDTVIRIRNRHNDVIPTMAQGVTEYKESFGVDPVTSQNVQYFLDRFYMSRISIRMLLNQHSLLFGGKGSPSHRKHIGSINPNCDVVEVIKDGYENARRLCDLYYVNSPELELEELNAKSPGQTIQVVYVPSHLYHMVFELFKNAMRATMEHHADKGVYPPIQVHVTLGEEDLTVKMSDRGGGVPLRKIDRLFNYMYSTAPRPRVETSRAVPLAGFGYGLPISRLYAQYFQGDLKLYSLEGYGTDAVIYIKALSTESVERLPVYNKAAWKHYKANHEADDWCVPSREPKDMTTFRSS</sequence>
<keyword id="KW-0067">ATP-binding</keyword>
<keyword id="KW-0418">Kinase</keyword>
<keyword id="KW-0496">Mitochondrion</keyword>
<keyword id="KW-0547">Nucleotide-binding</keyword>
<keyword id="KW-0597">Phosphoprotein</keyword>
<keyword id="KW-1185">Reference proteome</keyword>
<keyword id="KW-0808">Transferase</keyword>
<keyword id="KW-0809">Transit peptide</keyword>
<organism>
    <name type="scientific">Mus musculus</name>
    <name type="common">Mouse</name>
    <dbReference type="NCBI Taxonomy" id="10090"/>
    <lineage>
        <taxon>Eukaryota</taxon>
        <taxon>Metazoa</taxon>
        <taxon>Chordata</taxon>
        <taxon>Craniata</taxon>
        <taxon>Vertebrata</taxon>
        <taxon>Euteleostomi</taxon>
        <taxon>Mammalia</taxon>
        <taxon>Eutheria</taxon>
        <taxon>Euarchontoglires</taxon>
        <taxon>Glires</taxon>
        <taxon>Rodentia</taxon>
        <taxon>Myomorpha</taxon>
        <taxon>Muroidea</taxon>
        <taxon>Muridae</taxon>
        <taxon>Murinae</taxon>
        <taxon>Mus</taxon>
        <taxon>Mus</taxon>
    </lineage>
</organism>
<comment type="function">
    <text evidence="2 5">Kinase that plays a key role in regulation of glucose and fatty acid metabolism and homeostasis via phosphorylation of the pyruvate dehydrogenase subunits PDHA1 and PDHA2. This inhibits pyruvate dehydrogenase activity, and thereby regulates metabolite flux through the tricarboxylic acid cycle, down-regulates aerobic respiration and inhibits the formation of acetyl-coenzyme A from pyruvate. Plays an important role in cellular responses to hypoxia and is important for cell proliferation under hypoxia (By similarity).</text>
</comment>
<comment type="catalytic activity">
    <reaction evidence="2">
        <text>L-seryl-[pyruvate dehydrogenase E1 alpha subunit] + ATP = O-phospho-L-seryl-[pyruvate dehydrogenase E1 alpha subunit] + ADP + H(+)</text>
        <dbReference type="Rhea" id="RHEA:23052"/>
        <dbReference type="Rhea" id="RHEA-COMP:13689"/>
        <dbReference type="Rhea" id="RHEA-COMP:13690"/>
        <dbReference type="ChEBI" id="CHEBI:15378"/>
        <dbReference type="ChEBI" id="CHEBI:29999"/>
        <dbReference type="ChEBI" id="CHEBI:30616"/>
        <dbReference type="ChEBI" id="CHEBI:83421"/>
        <dbReference type="ChEBI" id="CHEBI:456216"/>
        <dbReference type="EC" id="2.7.11.2"/>
    </reaction>
</comment>
<comment type="subunit">
    <text evidence="2">Homodimer, and heterodimer with PDK2. Interacts with the pyruvate dehydrogenase complex subunit DLAT, and is part of the multimeric pyruvate dehydrogenase complex that contains multiple copies of pyruvate dehydrogenase (E1), dihydrolipoamide acetyltransferase (DLAT, E2) and lipoamide dehydrogenase (DLD, E3) (By similarity). Interacts with phosphoglycerate kinase PGK1; the interaction is direct, occurs under hypoxic conditions and leads to PDK1-mediated inhibition of pyruvate dehydrogenase complex activity (By similarity).</text>
</comment>
<comment type="subcellular location">
    <subcellularLocation>
        <location evidence="1">Mitochondrion matrix</location>
    </subcellularLocation>
</comment>
<comment type="induction">
    <text evidence="5 6">Up-regulated by glucose and palmitate. Up- regulated via the HIF1A signaling pathway in response to hypoxia.</text>
</comment>
<comment type="PTM">
    <text evidence="2">Phosphorylated by constitutively activated ABL1, FGFR1, FLT3 and JAK2 (in vitro), and this may also occur in cancer cells that express constitutively activated ABL1, FGFR1, FLT3 and JAK2. Phosphorylation at Tyr-241 and Tyr-242 strongly increases kinase activity, while phosphorylation at Tyr-136 has a lesser effect (By similarity). Phosphorylated under hypoxic conditions at Thr-336 by phosphoglycerate kinase PGK1 which has an activating effect (By similarity).</text>
</comment>
<comment type="similarity">
    <text evidence="7">Belongs to the PDK/BCKDK protein kinase family.</text>
</comment>
<reference key="1">
    <citation type="journal article" date="2005" name="Science">
        <title>The transcriptional landscape of the mammalian genome.</title>
        <authorList>
            <person name="Carninci P."/>
            <person name="Kasukawa T."/>
            <person name="Katayama S."/>
            <person name="Gough J."/>
            <person name="Frith M.C."/>
            <person name="Maeda N."/>
            <person name="Oyama R."/>
            <person name="Ravasi T."/>
            <person name="Lenhard B."/>
            <person name="Wells C."/>
            <person name="Kodzius R."/>
            <person name="Shimokawa K."/>
            <person name="Bajic V.B."/>
            <person name="Brenner S.E."/>
            <person name="Batalov S."/>
            <person name="Forrest A.R."/>
            <person name="Zavolan M."/>
            <person name="Davis M.J."/>
            <person name="Wilming L.G."/>
            <person name="Aidinis V."/>
            <person name="Allen J.E."/>
            <person name="Ambesi-Impiombato A."/>
            <person name="Apweiler R."/>
            <person name="Aturaliya R.N."/>
            <person name="Bailey T.L."/>
            <person name="Bansal M."/>
            <person name="Baxter L."/>
            <person name="Beisel K.W."/>
            <person name="Bersano T."/>
            <person name="Bono H."/>
            <person name="Chalk A.M."/>
            <person name="Chiu K.P."/>
            <person name="Choudhary V."/>
            <person name="Christoffels A."/>
            <person name="Clutterbuck D.R."/>
            <person name="Crowe M.L."/>
            <person name="Dalla E."/>
            <person name="Dalrymple B.P."/>
            <person name="de Bono B."/>
            <person name="Della Gatta G."/>
            <person name="di Bernardo D."/>
            <person name="Down T."/>
            <person name="Engstrom P."/>
            <person name="Fagiolini M."/>
            <person name="Faulkner G."/>
            <person name="Fletcher C.F."/>
            <person name="Fukushima T."/>
            <person name="Furuno M."/>
            <person name="Futaki S."/>
            <person name="Gariboldi M."/>
            <person name="Georgii-Hemming P."/>
            <person name="Gingeras T.R."/>
            <person name="Gojobori T."/>
            <person name="Green R.E."/>
            <person name="Gustincich S."/>
            <person name="Harbers M."/>
            <person name="Hayashi Y."/>
            <person name="Hensch T.K."/>
            <person name="Hirokawa N."/>
            <person name="Hill D."/>
            <person name="Huminiecki L."/>
            <person name="Iacono M."/>
            <person name="Ikeo K."/>
            <person name="Iwama A."/>
            <person name="Ishikawa T."/>
            <person name="Jakt M."/>
            <person name="Kanapin A."/>
            <person name="Katoh M."/>
            <person name="Kawasawa Y."/>
            <person name="Kelso J."/>
            <person name="Kitamura H."/>
            <person name="Kitano H."/>
            <person name="Kollias G."/>
            <person name="Krishnan S.P."/>
            <person name="Kruger A."/>
            <person name="Kummerfeld S.K."/>
            <person name="Kurochkin I.V."/>
            <person name="Lareau L.F."/>
            <person name="Lazarevic D."/>
            <person name="Lipovich L."/>
            <person name="Liu J."/>
            <person name="Liuni S."/>
            <person name="McWilliam S."/>
            <person name="Madan Babu M."/>
            <person name="Madera M."/>
            <person name="Marchionni L."/>
            <person name="Matsuda H."/>
            <person name="Matsuzawa S."/>
            <person name="Miki H."/>
            <person name="Mignone F."/>
            <person name="Miyake S."/>
            <person name="Morris K."/>
            <person name="Mottagui-Tabar S."/>
            <person name="Mulder N."/>
            <person name="Nakano N."/>
            <person name="Nakauchi H."/>
            <person name="Ng P."/>
            <person name="Nilsson R."/>
            <person name="Nishiguchi S."/>
            <person name="Nishikawa S."/>
            <person name="Nori F."/>
            <person name="Ohara O."/>
            <person name="Okazaki Y."/>
            <person name="Orlando V."/>
            <person name="Pang K.C."/>
            <person name="Pavan W.J."/>
            <person name="Pavesi G."/>
            <person name="Pesole G."/>
            <person name="Petrovsky N."/>
            <person name="Piazza S."/>
            <person name="Reed J."/>
            <person name="Reid J.F."/>
            <person name="Ring B.Z."/>
            <person name="Ringwald M."/>
            <person name="Rost B."/>
            <person name="Ruan Y."/>
            <person name="Salzberg S.L."/>
            <person name="Sandelin A."/>
            <person name="Schneider C."/>
            <person name="Schoenbach C."/>
            <person name="Sekiguchi K."/>
            <person name="Semple C.A."/>
            <person name="Seno S."/>
            <person name="Sessa L."/>
            <person name="Sheng Y."/>
            <person name="Shibata Y."/>
            <person name="Shimada H."/>
            <person name="Shimada K."/>
            <person name="Silva D."/>
            <person name="Sinclair B."/>
            <person name="Sperling S."/>
            <person name="Stupka E."/>
            <person name="Sugiura K."/>
            <person name="Sultana R."/>
            <person name="Takenaka Y."/>
            <person name="Taki K."/>
            <person name="Tammoja K."/>
            <person name="Tan S.L."/>
            <person name="Tang S."/>
            <person name="Taylor M.S."/>
            <person name="Tegner J."/>
            <person name="Teichmann S.A."/>
            <person name="Ueda H.R."/>
            <person name="van Nimwegen E."/>
            <person name="Verardo R."/>
            <person name="Wei C.L."/>
            <person name="Yagi K."/>
            <person name="Yamanishi H."/>
            <person name="Zabarovsky E."/>
            <person name="Zhu S."/>
            <person name="Zimmer A."/>
            <person name="Hide W."/>
            <person name="Bult C."/>
            <person name="Grimmond S.M."/>
            <person name="Teasdale R.D."/>
            <person name="Liu E.T."/>
            <person name="Brusic V."/>
            <person name="Quackenbush J."/>
            <person name="Wahlestedt C."/>
            <person name="Mattick J.S."/>
            <person name="Hume D.A."/>
            <person name="Kai C."/>
            <person name="Sasaki D."/>
            <person name="Tomaru Y."/>
            <person name="Fukuda S."/>
            <person name="Kanamori-Katayama M."/>
            <person name="Suzuki M."/>
            <person name="Aoki J."/>
            <person name="Arakawa T."/>
            <person name="Iida J."/>
            <person name="Imamura K."/>
            <person name="Itoh M."/>
            <person name="Kato T."/>
            <person name="Kawaji H."/>
            <person name="Kawagashira N."/>
            <person name="Kawashima T."/>
            <person name="Kojima M."/>
            <person name="Kondo S."/>
            <person name="Konno H."/>
            <person name="Nakano K."/>
            <person name="Ninomiya N."/>
            <person name="Nishio T."/>
            <person name="Okada M."/>
            <person name="Plessy C."/>
            <person name="Shibata K."/>
            <person name="Shiraki T."/>
            <person name="Suzuki S."/>
            <person name="Tagami M."/>
            <person name="Waki K."/>
            <person name="Watahiki A."/>
            <person name="Okamura-Oho Y."/>
            <person name="Suzuki H."/>
            <person name="Kawai J."/>
            <person name="Hayashizaki Y."/>
        </authorList>
    </citation>
    <scope>NUCLEOTIDE SEQUENCE [LARGE SCALE MRNA]</scope>
    <source>
        <strain>C57BL/6J</strain>
        <tissue>Medulla oblongata</tissue>
        <tissue>Thymus</tissue>
    </source>
</reference>
<reference key="2">
    <citation type="journal article" date="2009" name="PLoS Biol.">
        <title>Lineage-specific biology revealed by a finished genome assembly of the mouse.</title>
        <authorList>
            <person name="Church D.M."/>
            <person name="Goodstadt L."/>
            <person name="Hillier L.W."/>
            <person name="Zody M.C."/>
            <person name="Goldstein S."/>
            <person name="She X."/>
            <person name="Bult C.J."/>
            <person name="Agarwala R."/>
            <person name="Cherry J.L."/>
            <person name="DiCuccio M."/>
            <person name="Hlavina W."/>
            <person name="Kapustin Y."/>
            <person name="Meric P."/>
            <person name="Maglott D."/>
            <person name="Birtle Z."/>
            <person name="Marques A.C."/>
            <person name="Graves T."/>
            <person name="Zhou S."/>
            <person name="Teague B."/>
            <person name="Potamousis K."/>
            <person name="Churas C."/>
            <person name="Place M."/>
            <person name="Herschleb J."/>
            <person name="Runnheim R."/>
            <person name="Forrest D."/>
            <person name="Amos-Landgraf J."/>
            <person name="Schwartz D.C."/>
            <person name="Cheng Z."/>
            <person name="Lindblad-Toh K."/>
            <person name="Eichler E.E."/>
            <person name="Ponting C.P."/>
        </authorList>
    </citation>
    <scope>NUCLEOTIDE SEQUENCE [LARGE SCALE GENOMIC DNA]</scope>
    <source>
        <strain>C57BL/6J</strain>
    </source>
</reference>
<reference key="3">
    <citation type="submission" date="2005-07" db="EMBL/GenBank/DDBJ databases">
        <authorList>
            <person name="Mural R.J."/>
            <person name="Adams M.D."/>
            <person name="Myers E.W."/>
            <person name="Smith H.O."/>
            <person name="Venter J.C."/>
        </authorList>
    </citation>
    <scope>NUCLEOTIDE SEQUENCE [LARGE SCALE GENOMIC DNA]</scope>
</reference>
<reference key="4">
    <citation type="journal article" date="2006" name="Biochem. Biophys. Res. Commun.">
        <title>Regulation of PDK mRNA by high fatty acid and glucose in pancreatic islets.</title>
        <authorList>
            <person name="Xu J."/>
            <person name="Han J."/>
            <person name="Epstein P.N."/>
            <person name="Liu Y.Q."/>
        </authorList>
    </citation>
    <scope>INDUCTION BY PALMITATE AND GLUCOSE</scope>
</reference>
<reference key="5">
    <citation type="journal article" date="2006" name="Cell Metab.">
        <title>HIF-1 mediates adaptation to hypoxia by actively downregulating mitochondrial oxygen consumption.</title>
        <authorList>
            <person name="Papandreou I."/>
            <person name="Cairns R.A."/>
            <person name="Fontana L."/>
            <person name="Lim A.L."/>
            <person name="Denko N.C."/>
        </authorList>
    </citation>
    <scope>INDUCTION BY HYPOXIA</scope>
    <scope>FUNCTION</scope>
</reference>
<reference key="6">
    <citation type="journal article" date="2010" name="Cell">
        <title>A tissue-specific atlas of mouse protein phosphorylation and expression.</title>
        <authorList>
            <person name="Huttlin E.L."/>
            <person name="Jedrychowski M.P."/>
            <person name="Elias J.E."/>
            <person name="Goswami T."/>
            <person name="Rad R."/>
            <person name="Beausoleil S.A."/>
            <person name="Villen J."/>
            <person name="Haas W."/>
            <person name="Sowa M.E."/>
            <person name="Gygi S.P."/>
        </authorList>
    </citation>
    <scope>IDENTIFICATION BY MASS SPECTROMETRY [LARGE SCALE ANALYSIS]</scope>
    <source>
        <tissue>Brain</tissue>
        <tissue>Brown adipose tissue</tissue>
        <tissue>Heart</tissue>
        <tissue>Kidney</tissue>
        <tissue>Pancreas</tissue>
        <tissue>Spleen</tissue>
        <tissue>Testis</tissue>
    </source>
</reference>
<reference key="7">
    <citation type="journal article" date="2013" name="Mol. Cell">
        <title>SIRT5-mediated lysine desuccinylation impacts diverse metabolic pathways.</title>
        <authorList>
            <person name="Park J."/>
            <person name="Chen Y."/>
            <person name="Tishkoff D.X."/>
            <person name="Peng C."/>
            <person name="Tan M."/>
            <person name="Dai L."/>
            <person name="Xie Z."/>
            <person name="Zhang Y."/>
            <person name="Zwaans B.M."/>
            <person name="Skinner M.E."/>
            <person name="Lombard D.B."/>
            <person name="Zhao Y."/>
        </authorList>
    </citation>
    <scope>SUCCINYLATION [LARGE SCALE ANALYSIS] AT LYS-403</scope>
    <scope>IDENTIFICATION BY MASS SPECTROMETRY [LARGE SCALE ANALYSIS]</scope>
    <source>
        <tissue>Liver</tissue>
    </source>
</reference>
<dbReference type="EC" id="2.7.11.2" evidence="2"/>
<dbReference type="EMBL" id="AK046805">
    <property type="protein sequence ID" value="BAC32879.1"/>
    <property type="molecule type" value="mRNA"/>
</dbReference>
<dbReference type="EMBL" id="AK153649">
    <property type="protein sequence ID" value="BAE32134.1"/>
    <property type="molecule type" value="mRNA"/>
</dbReference>
<dbReference type="EMBL" id="AL928963">
    <property type="status" value="NOT_ANNOTATED_CDS"/>
    <property type="molecule type" value="Genomic_DNA"/>
</dbReference>
<dbReference type="EMBL" id="CH466519">
    <property type="protein sequence ID" value="EDL27100.1"/>
    <property type="molecule type" value="Genomic_DNA"/>
</dbReference>
<dbReference type="EMBL" id="CH466519">
    <property type="protein sequence ID" value="EDL27102.1"/>
    <property type="molecule type" value="Genomic_DNA"/>
</dbReference>
<dbReference type="EMBL" id="CH466519">
    <property type="protein sequence ID" value="EDL27104.1"/>
    <property type="molecule type" value="Genomic_DNA"/>
</dbReference>
<dbReference type="CCDS" id="CCDS16119.1"/>
<dbReference type="RefSeq" id="NP_766253.2">
    <property type="nucleotide sequence ID" value="NM_172665.5"/>
</dbReference>
<dbReference type="SMR" id="Q8BFP9"/>
<dbReference type="BioGRID" id="230707">
    <property type="interactions" value="13"/>
</dbReference>
<dbReference type="FunCoup" id="Q8BFP9">
    <property type="interactions" value="1720"/>
</dbReference>
<dbReference type="STRING" id="10090.ENSMUSP00000006669"/>
<dbReference type="ChEMBL" id="CHEMBL5465327"/>
<dbReference type="GlyGen" id="Q8BFP9">
    <property type="glycosylation" value="1 site, 1 O-linked glycan (1 site)"/>
</dbReference>
<dbReference type="iPTMnet" id="Q8BFP9"/>
<dbReference type="PhosphoSitePlus" id="Q8BFP9"/>
<dbReference type="SwissPalm" id="Q8BFP9"/>
<dbReference type="jPOST" id="Q8BFP9"/>
<dbReference type="PaxDb" id="10090-ENSMUSP00000006669"/>
<dbReference type="PeptideAtlas" id="Q8BFP9"/>
<dbReference type="ProteomicsDB" id="289336"/>
<dbReference type="Pumba" id="Q8BFP9"/>
<dbReference type="Antibodypedia" id="4312">
    <property type="antibodies" value="690 antibodies from 40 providers"/>
</dbReference>
<dbReference type="DNASU" id="228026"/>
<dbReference type="Ensembl" id="ENSMUST00000006669.6">
    <property type="protein sequence ID" value="ENSMUSP00000006669.6"/>
    <property type="gene ID" value="ENSMUSG00000006494.12"/>
</dbReference>
<dbReference type="GeneID" id="228026"/>
<dbReference type="KEGG" id="mmu:228026"/>
<dbReference type="UCSC" id="uc008kbh.2">
    <property type="organism name" value="mouse"/>
</dbReference>
<dbReference type="AGR" id="MGI:1926119"/>
<dbReference type="CTD" id="5163"/>
<dbReference type="MGI" id="MGI:1926119">
    <property type="gene designation" value="Pdk1"/>
</dbReference>
<dbReference type="VEuPathDB" id="HostDB:ENSMUSG00000006494"/>
<dbReference type="eggNOG" id="KOG0787">
    <property type="taxonomic scope" value="Eukaryota"/>
</dbReference>
<dbReference type="GeneTree" id="ENSGT01030000234646"/>
<dbReference type="HOGENOM" id="CLU_023861_1_1_1"/>
<dbReference type="InParanoid" id="Q8BFP9"/>
<dbReference type="OMA" id="NEMPSIC"/>
<dbReference type="OrthoDB" id="241648at2759"/>
<dbReference type="PhylomeDB" id="Q8BFP9"/>
<dbReference type="TreeFam" id="TF314918"/>
<dbReference type="BRENDA" id="2.7.11.2">
    <property type="organism ID" value="3474"/>
</dbReference>
<dbReference type="Reactome" id="R-MMU-204174">
    <property type="pathway name" value="Regulation of pyruvate dehydrogenase (PDH) complex"/>
</dbReference>
<dbReference type="Reactome" id="R-MMU-5362517">
    <property type="pathway name" value="Signaling by Retinoic Acid"/>
</dbReference>
<dbReference type="Reactome" id="R-MMU-9837999">
    <property type="pathway name" value="Mitochondrial protein degradation"/>
</dbReference>
<dbReference type="BioGRID-ORCS" id="228026">
    <property type="hits" value="0 hits in 82 CRISPR screens"/>
</dbReference>
<dbReference type="ChiTaRS" id="Pdk1">
    <property type="organism name" value="mouse"/>
</dbReference>
<dbReference type="PRO" id="PR:Q8BFP9"/>
<dbReference type="Proteomes" id="UP000000589">
    <property type="component" value="Chromosome 2"/>
</dbReference>
<dbReference type="RNAct" id="Q8BFP9">
    <property type="molecule type" value="protein"/>
</dbReference>
<dbReference type="Bgee" id="ENSMUSG00000006494">
    <property type="expression patterns" value="Expressed in iris and 296 other cell types or tissues"/>
</dbReference>
<dbReference type="GO" id="GO:0005759">
    <property type="term" value="C:mitochondrial matrix"/>
    <property type="evidence" value="ECO:0007669"/>
    <property type="project" value="UniProtKB-SubCell"/>
</dbReference>
<dbReference type="GO" id="GO:0005739">
    <property type="term" value="C:mitochondrion"/>
    <property type="evidence" value="ECO:0007005"/>
    <property type="project" value="MGI"/>
</dbReference>
<dbReference type="GO" id="GO:0005886">
    <property type="term" value="C:plasma membrane"/>
    <property type="evidence" value="ECO:0000247"/>
    <property type="project" value="MGI"/>
</dbReference>
<dbReference type="GO" id="GO:0045254">
    <property type="term" value="C:pyruvate dehydrogenase complex"/>
    <property type="evidence" value="ECO:0000314"/>
    <property type="project" value="UniProtKB"/>
</dbReference>
<dbReference type="GO" id="GO:0005524">
    <property type="term" value="F:ATP binding"/>
    <property type="evidence" value="ECO:0007669"/>
    <property type="project" value="UniProtKB-KW"/>
</dbReference>
<dbReference type="GO" id="GO:0004740">
    <property type="term" value="F:pyruvate dehydrogenase (acetyl-transferring) kinase activity"/>
    <property type="evidence" value="ECO:0000250"/>
    <property type="project" value="UniProtKB"/>
</dbReference>
<dbReference type="GO" id="GO:0008283">
    <property type="term" value="P:cell population proliferation"/>
    <property type="evidence" value="ECO:0000250"/>
    <property type="project" value="UniProtKB"/>
</dbReference>
<dbReference type="GO" id="GO:0097411">
    <property type="term" value="P:hypoxia-inducible factor-1alpha signaling pathway"/>
    <property type="evidence" value="ECO:0000250"/>
    <property type="project" value="UniProtKB"/>
</dbReference>
<dbReference type="GO" id="GO:0035556">
    <property type="term" value="P:intracellular signal transduction"/>
    <property type="evidence" value="ECO:0000247"/>
    <property type="project" value="MGI"/>
</dbReference>
<dbReference type="GO" id="GO:0008631">
    <property type="term" value="P:intrinsic apoptotic signaling pathway in response to oxidative stress"/>
    <property type="evidence" value="ECO:0000250"/>
    <property type="project" value="UniProtKB"/>
</dbReference>
<dbReference type="GO" id="GO:0010510">
    <property type="term" value="P:regulation of acetyl-CoA biosynthetic process from pyruvate"/>
    <property type="evidence" value="ECO:0000315"/>
    <property type="project" value="UniProtKB"/>
</dbReference>
<dbReference type="GO" id="GO:0010906">
    <property type="term" value="P:regulation of glucose metabolic process"/>
    <property type="evidence" value="ECO:0000250"/>
    <property type="project" value="UniProtKB"/>
</dbReference>
<dbReference type="CDD" id="cd16929">
    <property type="entry name" value="HATPase_PDK-like"/>
    <property type="match status" value="1"/>
</dbReference>
<dbReference type="FunFam" id="1.20.140.20:FF:000001">
    <property type="entry name" value="[Pyruvate dehydrogenase (acetyl-transferring)] kinase isozyme 2, mitochondrial"/>
    <property type="match status" value="1"/>
</dbReference>
<dbReference type="FunFam" id="3.30.565.10:FF:000007">
    <property type="entry name" value="Mitochondrial pyruvate dehydrogenase kinase isoform 2"/>
    <property type="match status" value="1"/>
</dbReference>
<dbReference type="Gene3D" id="1.20.140.20">
    <property type="entry name" value="Alpha-ketoacid/pyruvate dehydrogenase kinase, N-terminal domain"/>
    <property type="match status" value="1"/>
</dbReference>
<dbReference type="Gene3D" id="3.30.565.10">
    <property type="entry name" value="Histidine kinase-like ATPase, C-terminal domain"/>
    <property type="match status" value="1"/>
</dbReference>
<dbReference type="InterPro" id="IPR036784">
    <property type="entry name" value="AK/P_DHK_N_sf"/>
</dbReference>
<dbReference type="InterPro" id="IPR018955">
    <property type="entry name" value="BCDHK/PDK_N"/>
</dbReference>
<dbReference type="InterPro" id="IPR039028">
    <property type="entry name" value="BCKD/PDK"/>
</dbReference>
<dbReference type="InterPro" id="IPR036890">
    <property type="entry name" value="HATPase_C_sf"/>
</dbReference>
<dbReference type="InterPro" id="IPR005467">
    <property type="entry name" value="His_kinase_dom"/>
</dbReference>
<dbReference type="PANTHER" id="PTHR11947:SF14">
    <property type="entry name" value="[PYRUVATE DEHYDROGENASE (ACETYL-TRANSFERRING)] KINASE ISOZYME 1, MITOCHONDRIAL"/>
    <property type="match status" value="1"/>
</dbReference>
<dbReference type="PANTHER" id="PTHR11947">
    <property type="entry name" value="PYRUVATE DEHYDROGENASE KINASE"/>
    <property type="match status" value="1"/>
</dbReference>
<dbReference type="Pfam" id="PF10436">
    <property type="entry name" value="BCDHK_Adom3"/>
    <property type="match status" value="1"/>
</dbReference>
<dbReference type="Pfam" id="PF02518">
    <property type="entry name" value="HATPase_c"/>
    <property type="match status" value="1"/>
</dbReference>
<dbReference type="SMART" id="SM00387">
    <property type="entry name" value="HATPase_c"/>
    <property type="match status" value="1"/>
</dbReference>
<dbReference type="SUPFAM" id="SSF69012">
    <property type="entry name" value="alpha-ketoacid dehydrogenase kinase, N-terminal domain"/>
    <property type="match status" value="1"/>
</dbReference>
<dbReference type="SUPFAM" id="SSF55874">
    <property type="entry name" value="ATPase domain of HSP90 chaperone/DNA topoisomerase II/histidine kinase"/>
    <property type="match status" value="1"/>
</dbReference>
<dbReference type="PROSITE" id="PS50109">
    <property type="entry name" value="HIS_KIN"/>
    <property type="match status" value="1"/>
</dbReference>
<proteinExistence type="evidence at protein level"/>
<evidence type="ECO:0000250" key="1"/>
<evidence type="ECO:0000250" key="2">
    <source>
        <dbReference type="UniProtKB" id="Q15118"/>
    </source>
</evidence>
<evidence type="ECO:0000255" key="3"/>
<evidence type="ECO:0000255" key="4">
    <source>
        <dbReference type="PROSITE-ProRule" id="PRU00107"/>
    </source>
</evidence>
<evidence type="ECO:0000269" key="5">
    <source>
    </source>
</evidence>
<evidence type="ECO:0000269" key="6">
    <source>
    </source>
</evidence>
<evidence type="ECO:0000305" key="7"/>
<evidence type="ECO:0007744" key="8">
    <source>
    </source>
</evidence>